<organism>
    <name type="scientific">Arabidopsis thaliana</name>
    <name type="common">Mouse-ear cress</name>
    <dbReference type="NCBI Taxonomy" id="3702"/>
    <lineage>
        <taxon>Eukaryota</taxon>
        <taxon>Viridiplantae</taxon>
        <taxon>Streptophyta</taxon>
        <taxon>Embryophyta</taxon>
        <taxon>Tracheophyta</taxon>
        <taxon>Spermatophyta</taxon>
        <taxon>Magnoliopsida</taxon>
        <taxon>eudicotyledons</taxon>
        <taxon>Gunneridae</taxon>
        <taxon>Pentapetalae</taxon>
        <taxon>rosids</taxon>
        <taxon>malvids</taxon>
        <taxon>Brassicales</taxon>
        <taxon>Brassicaceae</taxon>
        <taxon>Camelineae</taxon>
        <taxon>Arabidopsis</taxon>
    </lineage>
</organism>
<proteinExistence type="evidence at protein level"/>
<evidence type="ECO:0000305" key="1"/>
<comment type="function">
    <text>Subunit of the integral membrane V0 complex of vacuolar ATPase. Vacuolar ATPase is responsible for acidifying a variety of intracellular compartments in eukaryotic cells, thus providing most of the energy required for transport processes in the vacuolar system.</text>
</comment>
<comment type="subunit">
    <text>V-ATPase is a heteromultimeric enzyme composed of a peripheral catalytic V1 complex (components A to H) attached to an integral membrane V0 proton pore complex (components: a, c, c'', d and e).</text>
</comment>
<comment type="interaction">
    <interactant intactId="EBI-25520180">
        <id>Q9LJI5</id>
    </interactant>
    <interactant intactId="EBI-4426557">
        <id>Q84MB2</id>
        <label>TIFY8</label>
    </interactant>
    <organismsDiffer>false</organismsDiffer>
    <experiments>3</experiments>
</comment>
<comment type="interaction">
    <interactant intactId="EBI-25520180">
        <id>Q9LJI5</id>
    </interactant>
    <interactant intactId="EBI-533373">
        <id>Q9SEI0</id>
        <label>WER</label>
    </interactant>
    <organismsDiffer>false</organismsDiffer>
    <experiments>3</experiments>
</comment>
<comment type="subcellular location">
    <subcellularLocation>
        <location evidence="1">Vacuole membrane</location>
        <topology evidence="1">Peripheral membrane protein</topology>
    </subcellularLocation>
</comment>
<comment type="similarity">
    <text evidence="1">Belongs to the V-ATPase V0D/AC39 subunit family.</text>
</comment>
<accession>Q9LJI5</accession>
<feature type="chain" id="PRO_0000119356" description="V-type proton ATPase subunit d1">
    <location>
        <begin position="1"/>
        <end position="351"/>
    </location>
</feature>
<gene>
    <name type="primary">VHA-d1</name>
    <name type="ordered locus">At3g28710</name>
    <name type="ORF">MZN14.21</name>
</gene>
<sequence>MYGFEALTFNIHGGYLEAIVRGHRAGLLTTADYNNLCQCENLDDIKMHLSATKYGSYLQNEPSPLHTTTIVEKCTLKLVDDYKHMLCQATEPMSTFLEYIRYGHMIDNVVLIVTGTLHERDVQELIEKCHPLGMFDSIATLAVAQNMRELYRLVLVDTPLAPYFSECLTSEDLDDMNIEIMRNTLYKAYLEDFYKFCQKLGGATAEIMSDLLAFEADRRAVNITINSIGTELTREDRKKLYSNFGLLYPYGHEELAICEDIDQVRGVMEKYPPYQAIFSKMSYGESQMLDKAFYEEEVRRLCLAFEQQFHYAVFFAYMRLREQEIRNLMWISECVAQNQKSRIHDSVVYMF</sequence>
<dbReference type="EMBL" id="AP000420">
    <property type="protein sequence ID" value="BAB02186.1"/>
    <property type="molecule type" value="Genomic_DNA"/>
</dbReference>
<dbReference type="EMBL" id="CP002686">
    <property type="protein sequence ID" value="AEE77480.1"/>
    <property type="molecule type" value="Genomic_DNA"/>
</dbReference>
<dbReference type="EMBL" id="AY039864">
    <property type="protein sequence ID" value="AAK63968.1"/>
    <property type="molecule type" value="mRNA"/>
</dbReference>
<dbReference type="EMBL" id="AY077656">
    <property type="protein sequence ID" value="AAL76134.1"/>
    <property type="molecule type" value="mRNA"/>
</dbReference>
<dbReference type="EMBL" id="AY142622">
    <property type="protein sequence ID" value="AAN13080.1"/>
    <property type="molecule type" value="mRNA"/>
</dbReference>
<dbReference type="RefSeq" id="NP_189512.1">
    <property type="nucleotide sequence ID" value="NM_113791.4"/>
</dbReference>
<dbReference type="SMR" id="Q9LJI5"/>
<dbReference type="BioGRID" id="7831">
    <property type="interactions" value="28"/>
</dbReference>
<dbReference type="FunCoup" id="Q9LJI5">
    <property type="interactions" value="4290"/>
</dbReference>
<dbReference type="IntAct" id="Q9LJI5">
    <property type="interactions" value="2"/>
</dbReference>
<dbReference type="STRING" id="3702.Q9LJI5"/>
<dbReference type="SwissPalm" id="Q9LJI5"/>
<dbReference type="PaxDb" id="3702-AT3G28710.1"/>
<dbReference type="ProteomicsDB" id="242301"/>
<dbReference type="EnsemblPlants" id="AT3G28710.1">
    <property type="protein sequence ID" value="AT3G28710.1"/>
    <property type="gene ID" value="AT3G28710"/>
</dbReference>
<dbReference type="GeneID" id="822502"/>
<dbReference type="Gramene" id="AT3G28710.1">
    <property type="protein sequence ID" value="AT3G28710.1"/>
    <property type="gene ID" value="AT3G28710"/>
</dbReference>
<dbReference type="KEGG" id="ath:AT3G28710"/>
<dbReference type="Araport" id="AT3G28710"/>
<dbReference type="TAIR" id="AT3G28710"/>
<dbReference type="eggNOG" id="KOG2957">
    <property type="taxonomic scope" value="Eukaryota"/>
</dbReference>
<dbReference type="HOGENOM" id="CLU_051277_0_0_1"/>
<dbReference type="InParanoid" id="Q9LJI5"/>
<dbReference type="OMA" id="ETLFPTC"/>
<dbReference type="OrthoDB" id="10250083at2759"/>
<dbReference type="PhylomeDB" id="Q9LJI5"/>
<dbReference type="PRO" id="PR:Q9LJI5"/>
<dbReference type="Proteomes" id="UP000006548">
    <property type="component" value="Chromosome 3"/>
</dbReference>
<dbReference type="ExpressionAtlas" id="Q9LJI5">
    <property type="expression patterns" value="baseline and differential"/>
</dbReference>
<dbReference type="GO" id="GO:0005829">
    <property type="term" value="C:cytosol"/>
    <property type="evidence" value="ECO:0007005"/>
    <property type="project" value="TAIR"/>
</dbReference>
<dbReference type="GO" id="GO:0005794">
    <property type="term" value="C:Golgi apparatus"/>
    <property type="evidence" value="ECO:0007005"/>
    <property type="project" value="TAIR"/>
</dbReference>
<dbReference type="GO" id="GO:0000325">
    <property type="term" value="C:plant-type vacuole"/>
    <property type="evidence" value="ECO:0007005"/>
    <property type="project" value="TAIR"/>
</dbReference>
<dbReference type="GO" id="GO:0005886">
    <property type="term" value="C:plasma membrane"/>
    <property type="evidence" value="ECO:0007005"/>
    <property type="project" value="TAIR"/>
</dbReference>
<dbReference type="GO" id="GO:0009506">
    <property type="term" value="C:plasmodesma"/>
    <property type="evidence" value="ECO:0007005"/>
    <property type="project" value="TAIR"/>
</dbReference>
<dbReference type="GO" id="GO:0033179">
    <property type="term" value="C:proton-transporting V-type ATPase, V0 domain"/>
    <property type="evidence" value="ECO:0007669"/>
    <property type="project" value="InterPro"/>
</dbReference>
<dbReference type="GO" id="GO:0005774">
    <property type="term" value="C:vacuolar membrane"/>
    <property type="evidence" value="ECO:0007005"/>
    <property type="project" value="TAIR"/>
</dbReference>
<dbReference type="GO" id="GO:0005773">
    <property type="term" value="C:vacuole"/>
    <property type="evidence" value="ECO:0007005"/>
    <property type="project" value="TAIR"/>
</dbReference>
<dbReference type="GO" id="GO:0046961">
    <property type="term" value="F:proton-transporting ATPase activity, rotational mechanism"/>
    <property type="evidence" value="ECO:0007669"/>
    <property type="project" value="InterPro"/>
</dbReference>
<dbReference type="FunFam" id="1.10.132.50:FF:000002">
    <property type="entry name" value="V-type proton ATPase subunit"/>
    <property type="match status" value="1"/>
</dbReference>
<dbReference type="FunFam" id="1.20.1690.10:FF:000001">
    <property type="entry name" value="V-type proton ATPase subunit"/>
    <property type="match status" value="1"/>
</dbReference>
<dbReference type="FunFam" id="1.20.1690.10:FF:000003">
    <property type="entry name" value="V-type proton ATPase subunit"/>
    <property type="match status" value="1"/>
</dbReference>
<dbReference type="Gene3D" id="1.10.132.50">
    <property type="entry name" value="ATP synthase (C/AC39) subunit, domain 3"/>
    <property type="match status" value="1"/>
</dbReference>
<dbReference type="Gene3D" id="1.20.1690.10">
    <property type="entry name" value="V-type ATP synthase subunit C domain"/>
    <property type="match status" value="2"/>
</dbReference>
<dbReference type="InterPro" id="IPR036079">
    <property type="entry name" value="ATPase_csu/dsu_sf"/>
</dbReference>
<dbReference type="InterPro" id="IPR002843">
    <property type="entry name" value="ATPase_V0-cplx_csu/dsu"/>
</dbReference>
<dbReference type="InterPro" id="IPR016727">
    <property type="entry name" value="ATPase_V0-cplx_dsu"/>
</dbReference>
<dbReference type="InterPro" id="IPR035067">
    <property type="entry name" value="V-type_ATPase_csu/dsu"/>
</dbReference>
<dbReference type="InterPro" id="IPR044911">
    <property type="entry name" value="V-type_ATPase_csu/dsu_dom_3"/>
</dbReference>
<dbReference type="PANTHER" id="PTHR11028">
    <property type="entry name" value="VACUOLAR ATP SYNTHASE SUBUNIT AC39"/>
    <property type="match status" value="1"/>
</dbReference>
<dbReference type="Pfam" id="PF01992">
    <property type="entry name" value="vATP-synt_AC39"/>
    <property type="match status" value="1"/>
</dbReference>
<dbReference type="PIRSF" id="PIRSF018497">
    <property type="entry name" value="V-ATP_synth_D"/>
    <property type="match status" value="1"/>
</dbReference>
<dbReference type="SUPFAM" id="SSF103486">
    <property type="entry name" value="V-type ATP synthase subunit C"/>
    <property type="match status" value="1"/>
</dbReference>
<name>VA0D1_ARATH</name>
<protein>
    <recommendedName>
        <fullName>V-type proton ATPase subunit d1</fullName>
        <shortName>V-ATPase subunit d1</shortName>
    </recommendedName>
    <alternativeName>
        <fullName>Vacuolar H(+)-ATPase subunit d isoform 1</fullName>
    </alternativeName>
    <alternativeName>
        <fullName>Vacuolar proton pump subunit d1</fullName>
    </alternativeName>
</protein>
<reference key="1">
    <citation type="journal article" date="2000" name="DNA Res.">
        <title>Structural analysis of Arabidopsis thaliana chromosome 3. I. Sequence features of the regions of 4,504,864 bp covered by sixty P1 and TAC clones.</title>
        <authorList>
            <person name="Sato S."/>
            <person name="Nakamura Y."/>
            <person name="Kaneko T."/>
            <person name="Katoh T."/>
            <person name="Asamizu E."/>
            <person name="Tabata S."/>
        </authorList>
    </citation>
    <scope>NUCLEOTIDE SEQUENCE [LARGE SCALE GENOMIC DNA]</scope>
    <source>
        <strain>cv. Columbia</strain>
    </source>
</reference>
<reference key="2">
    <citation type="journal article" date="2017" name="Plant J.">
        <title>Araport11: a complete reannotation of the Arabidopsis thaliana reference genome.</title>
        <authorList>
            <person name="Cheng C.Y."/>
            <person name="Krishnakumar V."/>
            <person name="Chan A.P."/>
            <person name="Thibaud-Nissen F."/>
            <person name="Schobel S."/>
            <person name="Town C.D."/>
        </authorList>
    </citation>
    <scope>GENOME REANNOTATION</scope>
    <source>
        <strain>cv. Columbia</strain>
    </source>
</reference>
<reference key="3">
    <citation type="journal article" date="2003" name="Science">
        <title>Empirical analysis of transcriptional activity in the Arabidopsis genome.</title>
        <authorList>
            <person name="Yamada K."/>
            <person name="Lim J."/>
            <person name="Dale J.M."/>
            <person name="Chen H."/>
            <person name="Shinn P."/>
            <person name="Palm C.J."/>
            <person name="Southwick A.M."/>
            <person name="Wu H.C."/>
            <person name="Kim C.J."/>
            <person name="Nguyen M."/>
            <person name="Pham P.K."/>
            <person name="Cheuk R.F."/>
            <person name="Karlin-Newmann G."/>
            <person name="Liu S.X."/>
            <person name="Lam B."/>
            <person name="Sakano H."/>
            <person name="Wu T."/>
            <person name="Yu G."/>
            <person name="Miranda M."/>
            <person name="Quach H.L."/>
            <person name="Tripp M."/>
            <person name="Chang C.H."/>
            <person name="Lee J.M."/>
            <person name="Toriumi M.J."/>
            <person name="Chan M.M."/>
            <person name="Tang C.C."/>
            <person name="Onodera C.S."/>
            <person name="Deng J.M."/>
            <person name="Akiyama K."/>
            <person name="Ansari Y."/>
            <person name="Arakawa T."/>
            <person name="Banh J."/>
            <person name="Banno F."/>
            <person name="Bowser L."/>
            <person name="Brooks S.Y."/>
            <person name="Carninci P."/>
            <person name="Chao Q."/>
            <person name="Choy N."/>
            <person name="Enju A."/>
            <person name="Goldsmith A.D."/>
            <person name="Gurjal M."/>
            <person name="Hansen N.F."/>
            <person name="Hayashizaki Y."/>
            <person name="Johnson-Hopson C."/>
            <person name="Hsuan V.W."/>
            <person name="Iida K."/>
            <person name="Karnes M."/>
            <person name="Khan S."/>
            <person name="Koesema E."/>
            <person name="Ishida J."/>
            <person name="Jiang P.X."/>
            <person name="Jones T."/>
            <person name="Kawai J."/>
            <person name="Kamiya A."/>
            <person name="Meyers C."/>
            <person name="Nakajima M."/>
            <person name="Narusaka M."/>
            <person name="Seki M."/>
            <person name="Sakurai T."/>
            <person name="Satou M."/>
            <person name="Tamse R."/>
            <person name="Vaysberg M."/>
            <person name="Wallender E.K."/>
            <person name="Wong C."/>
            <person name="Yamamura Y."/>
            <person name="Yuan S."/>
            <person name="Shinozaki K."/>
            <person name="Davis R.W."/>
            <person name="Theologis A."/>
            <person name="Ecker J.R."/>
        </authorList>
    </citation>
    <scope>NUCLEOTIDE SEQUENCE [LARGE SCALE MRNA]</scope>
    <source>
        <strain>cv. Columbia</strain>
    </source>
</reference>
<reference key="4">
    <citation type="journal article" date="2002" name="Trends Plant Sci.">
        <title>A simple nomenclature for a complex proton pump: VHA genes encode the vacuolar H(+)-ATPase.</title>
        <authorList>
            <person name="Sze H."/>
            <person name="Schumacher K."/>
            <person name="Mueller M.L."/>
            <person name="Padmanaban S."/>
            <person name="Taiz L."/>
        </authorList>
    </citation>
    <scope>GENE FAMILY</scope>
    <scope>NOMENCLATURE</scope>
</reference>
<keyword id="KW-0375">Hydrogen ion transport</keyword>
<keyword id="KW-0406">Ion transport</keyword>
<keyword id="KW-0472">Membrane</keyword>
<keyword id="KW-1185">Reference proteome</keyword>
<keyword id="KW-0813">Transport</keyword>
<keyword id="KW-0926">Vacuole</keyword>